<protein>
    <recommendedName>
        <fullName evidence="1">Porphobilinogen deaminase</fullName>
        <shortName evidence="1">PBG</shortName>
        <ecNumber evidence="1">2.5.1.61</ecNumber>
    </recommendedName>
    <alternativeName>
        <fullName evidence="1">Hydroxymethylbilane synthase</fullName>
        <shortName evidence="1">HMBS</shortName>
    </alternativeName>
    <alternativeName>
        <fullName evidence="1">Pre-uroporphyrinogen synthase</fullName>
    </alternativeName>
</protein>
<sequence>MIKKRSILIVTRKSPLALWQAEFVKQQIENSHPHLACQILGCTTQGDRLTTEKLVDSGGKDLFVKDLQKALLNRDADIAVHSIKDMSACDGPELMVGAFIRREDPRDVLIVKGELSTLPPHAVIGTSSPRRQCQLKKFQPGCKIKEIRGNVGTRLAKLDAGHYEAIVLAAAGLKRLGLENRIHYYFDPHEFIPAIGQGAIGVECRSDDHEMQTLLKSLDHRETRLCVTAERAVNEKLGGDCFTPIAAHAIIKNDQLSLFAMLGKIDGRVIIRATEIGNSEEAQRIGFKVASQLLEQGGDSLLRELKQ</sequence>
<gene>
    <name evidence="1" type="primary">hemC</name>
    <name type="ordered locus">CbuK_2119</name>
</gene>
<keyword id="KW-0627">Porphyrin biosynthesis</keyword>
<keyword id="KW-0808">Transferase</keyword>
<name>HEM3_COXB1</name>
<evidence type="ECO:0000255" key="1">
    <source>
        <dbReference type="HAMAP-Rule" id="MF_00260"/>
    </source>
</evidence>
<accession>B6J6K0</accession>
<comment type="function">
    <text evidence="1">Tetrapolymerization of the monopyrrole PBG into the hydroxymethylbilane pre-uroporphyrinogen in several discrete steps.</text>
</comment>
<comment type="catalytic activity">
    <reaction evidence="1">
        <text>4 porphobilinogen + H2O = hydroxymethylbilane + 4 NH4(+)</text>
        <dbReference type="Rhea" id="RHEA:13185"/>
        <dbReference type="ChEBI" id="CHEBI:15377"/>
        <dbReference type="ChEBI" id="CHEBI:28938"/>
        <dbReference type="ChEBI" id="CHEBI:57845"/>
        <dbReference type="ChEBI" id="CHEBI:58126"/>
        <dbReference type="EC" id="2.5.1.61"/>
    </reaction>
</comment>
<comment type="cofactor">
    <cofactor evidence="1">
        <name>dipyrromethane</name>
        <dbReference type="ChEBI" id="CHEBI:60342"/>
    </cofactor>
    <text evidence="1">Binds 1 dipyrromethane group covalently.</text>
</comment>
<comment type="pathway">
    <text evidence="1">Porphyrin-containing compound metabolism; protoporphyrin-IX biosynthesis; coproporphyrinogen-III from 5-aminolevulinate: step 2/4.</text>
</comment>
<comment type="subunit">
    <text evidence="1">Monomer.</text>
</comment>
<comment type="miscellaneous">
    <text evidence="1">The porphobilinogen subunits are added to the dipyrromethane group.</text>
</comment>
<comment type="similarity">
    <text evidence="1">Belongs to the HMBS family.</text>
</comment>
<feature type="chain" id="PRO_1000114146" description="Porphobilinogen deaminase">
    <location>
        <begin position="1"/>
        <end position="307"/>
    </location>
</feature>
<feature type="modified residue" description="S-(dipyrrolylmethanemethyl)cysteine" evidence="1">
    <location>
        <position position="241"/>
    </location>
</feature>
<reference key="1">
    <citation type="journal article" date="2009" name="Infect. Immun.">
        <title>Comparative genomics reveal extensive transposon-mediated genomic plasticity and diversity among potential effector proteins within the genus Coxiella.</title>
        <authorList>
            <person name="Beare P.A."/>
            <person name="Unsworth N."/>
            <person name="Andoh M."/>
            <person name="Voth D.E."/>
            <person name="Omsland A."/>
            <person name="Gilk S.D."/>
            <person name="Williams K.P."/>
            <person name="Sobral B.W."/>
            <person name="Kupko J.J. III"/>
            <person name="Porcella S.F."/>
            <person name="Samuel J.E."/>
            <person name="Heinzen R.A."/>
        </authorList>
    </citation>
    <scope>NUCLEOTIDE SEQUENCE [LARGE SCALE GENOMIC DNA]</scope>
    <source>
        <strain>CbuK_Q154</strain>
    </source>
</reference>
<proteinExistence type="inferred from homology"/>
<organism>
    <name type="scientific">Coxiella burnetii (strain CbuK_Q154)</name>
    <name type="common">Coxiella burnetii (strain Q154)</name>
    <dbReference type="NCBI Taxonomy" id="434924"/>
    <lineage>
        <taxon>Bacteria</taxon>
        <taxon>Pseudomonadati</taxon>
        <taxon>Pseudomonadota</taxon>
        <taxon>Gammaproteobacteria</taxon>
        <taxon>Legionellales</taxon>
        <taxon>Coxiellaceae</taxon>
        <taxon>Coxiella</taxon>
    </lineage>
</organism>
<dbReference type="EC" id="2.5.1.61" evidence="1"/>
<dbReference type="EMBL" id="CP001020">
    <property type="protein sequence ID" value="ACJ21210.1"/>
    <property type="molecule type" value="Genomic_DNA"/>
</dbReference>
<dbReference type="RefSeq" id="WP_005769883.1">
    <property type="nucleotide sequence ID" value="NC_011528.1"/>
</dbReference>
<dbReference type="SMR" id="B6J6K0"/>
<dbReference type="KEGG" id="cbc:CbuK_2119"/>
<dbReference type="HOGENOM" id="CLU_019704_1_0_6"/>
<dbReference type="UniPathway" id="UPA00251">
    <property type="reaction ID" value="UER00319"/>
</dbReference>
<dbReference type="GO" id="GO:0005737">
    <property type="term" value="C:cytoplasm"/>
    <property type="evidence" value="ECO:0007669"/>
    <property type="project" value="TreeGrafter"/>
</dbReference>
<dbReference type="GO" id="GO:0004418">
    <property type="term" value="F:hydroxymethylbilane synthase activity"/>
    <property type="evidence" value="ECO:0007669"/>
    <property type="project" value="UniProtKB-UniRule"/>
</dbReference>
<dbReference type="GO" id="GO:0006782">
    <property type="term" value="P:protoporphyrinogen IX biosynthetic process"/>
    <property type="evidence" value="ECO:0007669"/>
    <property type="project" value="UniProtKB-UniRule"/>
</dbReference>
<dbReference type="FunFam" id="3.40.190.10:FF:000005">
    <property type="entry name" value="Porphobilinogen deaminase"/>
    <property type="match status" value="1"/>
</dbReference>
<dbReference type="FunFam" id="3.40.190.10:FF:000086">
    <property type="entry name" value="Probable porphobilinogen deaminase"/>
    <property type="match status" value="1"/>
</dbReference>
<dbReference type="Gene3D" id="3.40.190.10">
    <property type="entry name" value="Periplasmic binding protein-like II"/>
    <property type="match status" value="2"/>
</dbReference>
<dbReference type="Gene3D" id="3.30.160.40">
    <property type="entry name" value="Porphobilinogen deaminase, C-terminal domain"/>
    <property type="match status" value="1"/>
</dbReference>
<dbReference type="HAMAP" id="MF_00260">
    <property type="entry name" value="Porphobil_deam"/>
    <property type="match status" value="1"/>
</dbReference>
<dbReference type="InterPro" id="IPR000860">
    <property type="entry name" value="HemC"/>
</dbReference>
<dbReference type="InterPro" id="IPR022419">
    <property type="entry name" value="Porphobilin_deaminase_cofac_BS"/>
</dbReference>
<dbReference type="InterPro" id="IPR022417">
    <property type="entry name" value="Porphobilin_deaminase_N"/>
</dbReference>
<dbReference type="InterPro" id="IPR022418">
    <property type="entry name" value="Porphobilinogen_deaminase_C"/>
</dbReference>
<dbReference type="InterPro" id="IPR036803">
    <property type="entry name" value="Porphobilinogen_deaminase_C_sf"/>
</dbReference>
<dbReference type="NCBIfam" id="TIGR00212">
    <property type="entry name" value="hemC"/>
    <property type="match status" value="1"/>
</dbReference>
<dbReference type="PANTHER" id="PTHR11557">
    <property type="entry name" value="PORPHOBILINOGEN DEAMINASE"/>
    <property type="match status" value="1"/>
</dbReference>
<dbReference type="PANTHER" id="PTHR11557:SF0">
    <property type="entry name" value="PORPHOBILINOGEN DEAMINASE"/>
    <property type="match status" value="1"/>
</dbReference>
<dbReference type="Pfam" id="PF01379">
    <property type="entry name" value="Porphobil_deam"/>
    <property type="match status" value="1"/>
</dbReference>
<dbReference type="Pfam" id="PF03900">
    <property type="entry name" value="Porphobil_deamC"/>
    <property type="match status" value="1"/>
</dbReference>
<dbReference type="PIRSF" id="PIRSF001438">
    <property type="entry name" value="4pyrrol_synth_OHMeBilane_synth"/>
    <property type="match status" value="1"/>
</dbReference>
<dbReference type="PRINTS" id="PR00151">
    <property type="entry name" value="PORPHBDMNASE"/>
</dbReference>
<dbReference type="SUPFAM" id="SSF53850">
    <property type="entry name" value="Periplasmic binding protein-like II"/>
    <property type="match status" value="1"/>
</dbReference>
<dbReference type="SUPFAM" id="SSF54782">
    <property type="entry name" value="Porphobilinogen deaminase (hydroxymethylbilane synthase), C-terminal domain"/>
    <property type="match status" value="1"/>
</dbReference>
<dbReference type="PROSITE" id="PS00533">
    <property type="entry name" value="PORPHOBILINOGEN_DEAM"/>
    <property type="match status" value="1"/>
</dbReference>